<evidence type="ECO:0000255" key="1">
    <source>
        <dbReference type="HAMAP-Rule" id="MF_00023"/>
    </source>
</evidence>
<evidence type="ECO:0000256" key="2">
    <source>
        <dbReference type="SAM" id="MobiDB-lite"/>
    </source>
</evidence>
<evidence type="ECO:0000305" key="3"/>
<name>SSRP_NEIMA</name>
<accession>P0A0Y7</accession>
<accession>A1ISU3</accession>
<accession>Q51111</accession>
<proteinExistence type="inferred from homology"/>
<comment type="function">
    <text evidence="1">Required for rescue of stalled ribosomes mediated by trans-translation. Binds to transfer-messenger RNA (tmRNA), required for stable association of tmRNA with ribosomes. tmRNA and SmpB together mimic tRNA shape, replacing the anticodon stem-loop with SmpB. tmRNA is encoded by the ssrA gene; the 2 termini fold to resemble tRNA(Ala) and it encodes a 'tag peptide', a short internal open reading frame. During trans-translation Ala-aminoacylated tmRNA acts like a tRNA, entering the A-site of stalled ribosomes, displacing the stalled mRNA. The ribosome then switches to translate the ORF on the tmRNA; the nascent peptide is terminated with the 'tag peptide' encoded by the tmRNA and targeted for degradation. The ribosome is freed to recommence translation, which seems to be the essential function of trans-translation.</text>
</comment>
<comment type="subcellular location">
    <subcellularLocation>
        <location evidence="1">Cytoplasm</location>
    </subcellularLocation>
    <text evidence="1">The tmRNA-SmpB complex associates with stalled 70S ribosomes.</text>
</comment>
<comment type="similarity">
    <text evidence="1">Belongs to the SmpB family.</text>
</comment>
<comment type="sequence caution" evidence="3">
    <conflict type="erroneous initiation">
        <sequence resource="EMBL-CDS" id="CAM08855"/>
    </conflict>
    <text>Extended N-terminus.</text>
</comment>
<keyword id="KW-0963">Cytoplasm</keyword>
<keyword id="KW-0694">RNA-binding</keyword>
<protein>
    <recommendedName>
        <fullName evidence="1">SsrA-binding protein</fullName>
    </recommendedName>
    <alternativeName>
        <fullName evidence="1">Small protein B</fullName>
    </alternativeName>
</protein>
<feature type="chain" id="PRO_0000102993" description="SsrA-binding protein">
    <location>
        <begin position="1"/>
        <end position="148"/>
    </location>
</feature>
<feature type="region of interest" description="Disordered" evidence="2">
    <location>
        <begin position="119"/>
        <end position="148"/>
    </location>
</feature>
<feature type="compositionally biased region" description="Basic and acidic residues" evidence="2">
    <location>
        <begin position="127"/>
        <end position="142"/>
    </location>
</feature>
<organism>
    <name type="scientific">Neisseria meningitidis serogroup A / serotype 4A (strain DSM 15465 / Z2491)</name>
    <dbReference type="NCBI Taxonomy" id="122587"/>
    <lineage>
        <taxon>Bacteria</taxon>
        <taxon>Pseudomonadati</taxon>
        <taxon>Pseudomonadota</taxon>
        <taxon>Betaproteobacteria</taxon>
        <taxon>Neisseriales</taxon>
        <taxon>Neisseriaceae</taxon>
        <taxon>Neisseria</taxon>
    </lineage>
</organism>
<reference key="1">
    <citation type="journal article" date="2000" name="Nature">
        <title>Complete DNA sequence of a serogroup A strain of Neisseria meningitidis Z2491.</title>
        <authorList>
            <person name="Parkhill J."/>
            <person name="Achtman M."/>
            <person name="James K.D."/>
            <person name="Bentley S.D."/>
            <person name="Churcher C.M."/>
            <person name="Klee S.R."/>
            <person name="Morelli G."/>
            <person name="Basham D."/>
            <person name="Brown D."/>
            <person name="Chillingworth T."/>
            <person name="Davies R.M."/>
            <person name="Davis P."/>
            <person name="Devlin K."/>
            <person name="Feltwell T."/>
            <person name="Hamlin N."/>
            <person name="Holroyd S."/>
            <person name="Jagels K."/>
            <person name="Leather S."/>
            <person name="Moule S."/>
            <person name="Mungall K.L."/>
            <person name="Quail M.A."/>
            <person name="Rajandream M.A."/>
            <person name="Rutherford K.M."/>
            <person name="Simmonds M."/>
            <person name="Skelton J."/>
            <person name="Whitehead S."/>
            <person name="Spratt B.G."/>
            <person name="Barrell B.G."/>
        </authorList>
    </citation>
    <scope>NUCLEOTIDE SEQUENCE [LARGE SCALE GENOMIC DNA]</scope>
    <source>
        <strain>DSM 15465 / Z2491</strain>
    </source>
</reference>
<gene>
    <name evidence="1" type="primary">smpB</name>
    <name type="ordered locus">NMA1726</name>
</gene>
<sequence>MAIANNKKAFHDFFIEDRIEAGLVLEGWEVKAIRAARVQLKESYIYWKKDAFYLVGCHITALPTASTHIKPDAVRPRKLLLNQSEINKLIGKTERAGYTIVPLDLHFSRGKIKMEIGLAKGKKQHDKRQSMKEADWKREKQRLIKHTR</sequence>
<dbReference type="EMBL" id="AL157959">
    <property type="protein sequence ID" value="CAM08855.1"/>
    <property type="status" value="ALT_INIT"/>
    <property type="molecule type" value="Genomic_DNA"/>
</dbReference>
<dbReference type="RefSeq" id="WP_002229688.1">
    <property type="nucleotide sequence ID" value="NC_003116.1"/>
</dbReference>
<dbReference type="SMR" id="P0A0Y7"/>
<dbReference type="EnsemblBacteria" id="CAM08855">
    <property type="protein sequence ID" value="CAM08855"/>
    <property type="gene ID" value="NMA1726"/>
</dbReference>
<dbReference type="GeneID" id="93387853"/>
<dbReference type="KEGG" id="nma:NMA1726"/>
<dbReference type="HOGENOM" id="CLU_108953_3_0_4"/>
<dbReference type="Proteomes" id="UP000000626">
    <property type="component" value="Chromosome"/>
</dbReference>
<dbReference type="GO" id="GO:0005829">
    <property type="term" value="C:cytosol"/>
    <property type="evidence" value="ECO:0007669"/>
    <property type="project" value="TreeGrafter"/>
</dbReference>
<dbReference type="GO" id="GO:0003723">
    <property type="term" value="F:RNA binding"/>
    <property type="evidence" value="ECO:0007669"/>
    <property type="project" value="UniProtKB-UniRule"/>
</dbReference>
<dbReference type="GO" id="GO:0070929">
    <property type="term" value="P:trans-translation"/>
    <property type="evidence" value="ECO:0007669"/>
    <property type="project" value="UniProtKB-UniRule"/>
</dbReference>
<dbReference type="CDD" id="cd09294">
    <property type="entry name" value="SmpB"/>
    <property type="match status" value="1"/>
</dbReference>
<dbReference type="Gene3D" id="2.40.280.10">
    <property type="match status" value="1"/>
</dbReference>
<dbReference type="HAMAP" id="MF_00023">
    <property type="entry name" value="SmpB"/>
    <property type="match status" value="1"/>
</dbReference>
<dbReference type="InterPro" id="IPR023620">
    <property type="entry name" value="SmpB"/>
</dbReference>
<dbReference type="InterPro" id="IPR000037">
    <property type="entry name" value="SsrA-bd_prot"/>
</dbReference>
<dbReference type="InterPro" id="IPR020081">
    <property type="entry name" value="SsrA-bd_prot_CS"/>
</dbReference>
<dbReference type="NCBIfam" id="NF003843">
    <property type="entry name" value="PRK05422.1"/>
    <property type="match status" value="1"/>
</dbReference>
<dbReference type="NCBIfam" id="TIGR00086">
    <property type="entry name" value="smpB"/>
    <property type="match status" value="1"/>
</dbReference>
<dbReference type="PANTHER" id="PTHR30308:SF2">
    <property type="entry name" value="SSRA-BINDING PROTEIN"/>
    <property type="match status" value="1"/>
</dbReference>
<dbReference type="PANTHER" id="PTHR30308">
    <property type="entry name" value="TMRNA-BINDING COMPONENT OF TRANS-TRANSLATION TAGGING COMPLEX"/>
    <property type="match status" value="1"/>
</dbReference>
<dbReference type="Pfam" id="PF01668">
    <property type="entry name" value="SmpB"/>
    <property type="match status" value="1"/>
</dbReference>
<dbReference type="SUPFAM" id="SSF74982">
    <property type="entry name" value="Small protein B (SmpB)"/>
    <property type="match status" value="1"/>
</dbReference>
<dbReference type="PROSITE" id="PS01317">
    <property type="entry name" value="SSRP"/>
    <property type="match status" value="1"/>
</dbReference>